<keyword id="KW-0963">Cytoplasm</keyword>
<keyword id="KW-0489">Methyltransferase</keyword>
<keyword id="KW-0539">Nucleus</keyword>
<keyword id="KW-1185">Reference proteome</keyword>
<keyword id="KW-0949">S-adenosyl-L-methionine</keyword>
<keyword id="KW-0808">Transferase</keyword>
<gene>
    <name type="primary">mtq2</name>
    <name type="ORF">SPAC323.05c</name>
</gene>
<accession>Q9UT94</accession>
<feature type="chain" id="PRO_0000362148" description="eRF1 methyltransferase catalytic subunit mtq2">
    <location>
        <begin position="1"/>
        <end position="231"/>
    </location>
</feature>
<feature type="binding site" evidence="1">
    <location>
        <begin position="54"/>
        <end position="58"/>
    </location>
    <ligand>
        <name>S-adenosyl-L-methionine</name>
        <dbReference type="ChEBI" id="CHEBI:59789"/>
    </ligand>
</feature>
<feature type="binding site" evidence="1">
    <location>
        <position position="80"/>
    </location>
    <ligand>
        <name>S-adenosyl-L-methionine</name>
        <dbReference type="ChEBI" id="CHEBI:59789"/>
    </ligand>
</feature>
<feature type="binding site" evidence="1">
    <location>
        <begin position="130"/>
        <end position="133"/>
    </location>
    <ligand>
        <name>substrate</name>
    </ligand>
</feature>
<feature type="binding site" evidence="1">
    <location>
        <position position="130"/>
    </location>
    <ligand>
        <name>S-adenosyl-L-methionine</name>
        <dbReference type="ChEBI" id="CHEBI:59789"/>
    </ligand>
</feature>
<name>MTQ2_SCHPO</name>
<proteinExistence type="inferred from homology"/>
<comment type="function">
    <text evidence="2">Methylates eRF1 on 'Gln-182' using S-adenosyl L-methionine as methyl donor. eRF1 needs to be complexed to eRF3 in its GTP-bound form to be efficiently methylated.</text>
</comment>
<comment type="catalytic activity">
    <reaction evidence="2">
        <text>L-glutaminyl-[peptide chain release factor] + S-adenosyl-L-methionine = N(5)-methyl-L-glutaminyl-[peptide chain release factor] + S-adenosyl-L-homocysteine + H(+)</text>
        <dbReference type="Rhea" id="RHEA:42896"/>
        <dbReference type="Rhea" id="RHEA-COMP:10271"/>
        <dbReference type="Rhea" id="RHEA-COMP:10272"/>
        <dbReference type="ChEBI" id="CHEBI:15378"/>
        <dbReference type="ChEBI" id="CHEBI:30011"/>
        <dbReference type="ChEBI" id="CHEBI:57856"/>
        <dbReference type="ChEBI" id="CHEBI:59789"/>
        <dbReference type="ChEBI" id="CHEBI:61891"/>
        <dbReference type="EC" id="2.1.1.297"/>
    </reaction>
</comment>
<comment type="subunit">
    <text evidence="1">Heterodimer of mtq2-trm112. mtq2 is the catalytic subunit carrying the catalytic and the S-adenosyl L-methionine binding sites (By similarity).</text>
</comment>
<comment type="subcellular location">
    <subcellularLocation>
        <location evidence="3">Cytoplasm</location>
    </subcellularLocation>
    <subcellularLocation>
        <location evidence="3">Nucleus</location>
    </subcellularLocation>
</comment>
<comment type="similarity">
    <text evidence="4">Belongs to the eukaryotic/archaeal PrmC-related family.</text>
</comment>
<dbReference type="EC" id="2.1.1.297" evidence="2"/>
<dbReference type="EMBL" id="CU329670">
    <property type="protein sequence ID" value="CAB53408.1"/>
    <property type="molecule type" value="Genomic_DNA"/>
</dbReference>
<dbReference type="PIR" id="T38642">
    <property type="entry name" value="T38642"/>
</dbReference>
<dbReference type="RefSeq" id="NP_594375.1">
    <property type="nucleotide sequence ID" value="NM_001019796.2"/>
</dbReference>
<dbReference type="SMR" id="Q9UT94"/>
<dbReference type="BioGRID" id="278936">
    <property type="interactions" value="1"/>
</dbReference>
<dbReference type="FunCoup" id="Q9UT94">
    <property type="interactions" value="162"/>
</dbReference>
<dbReference type="STRING" id="284812.Q9UT94"/>
<dbReference type="iPTMnet" id="Q9UT94"/>
<dbReference type="PaxDb" id="4896-SPAC323.05c.1"/>
<dbReference type="EnsemblFungi" id="SPAC323.05c.1">
    <property type="protein sequence ID" value="SPAC323.05c.1:pep"/>
    <property type="gene ID" value="SPAC323.05c"/>
</dbReference>
<dbReference type="GeneID" id="2542476"/>
<dbReference type="KEGG" id="spo:2542476"/>
<dbReference type="PomBase" id="SPAC323.05c">
    <property type="gene designation" value="mtq2"/>
</dbReference>
<dbReference type="VEuPathDB" id="FungiDB:SPAC323.05c"/>
<dbReference type="eggNOG" id="KOG3191">
    <property type="taxonomic scope" value="Eukaryota"/>
</dbReference>
<dbReference type="HOGENOM" id="CLU_018398_6_0_1"/>
<dbReference type="InParanoid" id="Q9UT94"/>
<dbReference type="OMA" id="EWDDWME"/>
<dbReference type="PhylomeDB" id="Q9UT94"/>
<dbReference type="Reactome" id="R-SPO-156581">
    <property type="pathway name" value="Methylation"/>
</dbReference>
<dbReference type="Reactome" id="R-SPO-72764">
    <property type="pathway name" value="Eukaryotic Translation Termination"/>
</dbReference>
<dbReference type="PRO" id="PR:Q9UT94"/>
<dbReference type="Proteomes" id="UP000002485">
    <property type="component" value="Chromosome I"/>
</dbReference>
<dbReference type="GO" id="GO:0005829">
    <property type="term" value="C:cytosol"/>
    <property type="evidence" value="ECO:0007005"/>
    <property type="project" value="PomBase"/>
</dbReference>
<dbReference type="GO" id="GO:0035657">
    <property type="term" value="C:eRF1 methyltransferase complex"/>
    <property type="evidence" value="ECO:0000318"/>
    <property type="project" value="GO_Central"/>
</dbReference>
<dbReference type="GO" id="GO:0005634">
    <property type="term" value="C:nucleus"/>
    <property type="evidence" value="ECO:0007005"/>
    <property type="project" value="PomBase"/>
</dbReference>
<dbReference type="GO" id="GO:0003676">
    <property type="term" value="F:nucleic acid binding"/>
    <property type="evidence" value="ECO:0007669"/>
    <property type="project" value="InterPro"/>
</dbReference>
<dbReference type="GO" id="GO:0008276">
    <property type="term" value="F:protein methyltransferase activity"/>
    <property type="evidence" value="ECO:0000318"/>
    <property type="project" value="GO_Central"/>
</dbReference>
<dbReference type="GO" id="GO:0102559">
    <property type="term" value="F:protein-(glutamine-N5) methyltransferase activity"/>
    <property type="evidence" value="ECO:0007669"/>
    <property type="project" value="UniProtKB-EC"/>
</dbReference>
<dbReference type="GO" id="GO:0036009">
    <property type="term" value="F:protein-glutamine N-methyltransferase activity"/>
    <property type="evidence" value="ECO:0000266"/>
    <property type="project" value="PomBase"/>
</dbReference>
<dbReference type="GO" id="GO:0008757">
    <property type="term" value="F:S-adenosylmethionine-dependent methyltransferase activity"/>
    <property type="evidence" value="ECO:0000318"/>
    <property type="project" value="GO_Central"/>
</dbReference>
<dbReference type="GO" id="GO:0034605">
    <property type="term" value="P:cellular response to heat"/>
    <property type="evidence" value="ECO:0000269"/>
    <property type="project" value="PomBase"/>
</dbReference>
<dbReference type="GO" id="GO:0002184">
    <property type="term" value="P:cytoplasmic translational termination"/>
    <property type="evidence" value="ECO:0000266"/>
    <property type="project" value="PomBase"/>
</dbReference>
<dbReference type="GO" id="GO:0032259">
    <property type="term" value="P:methylation"/>
    <property type="evidence" value="ECO:0007669"/>
    <property type="project" value="UniProtKB-KW"/>
</dbReference>
<dbReference type="FunFam" id="3.40.50.150:FF:000077">
    <property type="entry name" value="HemK methyltransferase family member 2"/>
    <property type="match status" value="1"/>
</dbReference>
<dbReference type="Gene3D" id="3.40.50.150">
    <property type="entry name" value="Vaccinia Virus protein VP39"/>
    <property type="match status" value="1"/>
</dbReference>
<dbReference type="InterPro" id="IPR002052">
    <property type="entry name" value="DNA_methylase_N6_adenine_CS"/>
</dbReference>
<dbReference type="InterPro" id="IPR052190">
    <property type="entry name" value="Euk-Arch_PrmC-MTase"/>
</dbReference>
<dbReference type="InterPro" id="IPR029063">
    <property type="entry name" value="SAM-dependent_MTases_sf"/>
</dbReference>
<dbReference type="PANTHER" id="PTHR45875">
    <property type="entry name" value="METHYLTRANSFERASE N6AMT1"/>
    <property type="match status" value="1"/>
</dbReference>
<dbReference type="PANTHER" id="PTHR45875:SF1">
    <property type="entry name" value="METHYLTRANSFERASE N6AMT1"/>
    <property type="match status" value="1"/>
</dbReference>
<dbReference type="SUPFAM" id="SSF53335">
    <property type="entry name" value="S-adenosyl-L-methionine-dependent methyltransferases"/>
    <property type="match status" value="1"/>
</dbReference>
<dbReference type="PROSITE" id="PS00092">
    <property type="entry name" value="N6_MTASE"/>
    <property type="match status" value="1"/>
</dbReference>
<sequence length="231" mass="25560">MLSTPVTSQLRLKEFQDVYEPAEDTFALLDALEKDAKKLRQMAEMKNLLTAEIGCGSGCASSFLKSGILKNKPIVHFMSDISNSACRASKITALNNRELYKDDNGLFITVQTSFLDGIRLGNGVDILIFNPPYVPTEFEEIPSEAATIASAWAGGTDGMDVTSTLLNQLKDILSQDGVFYMVAVARNKLHSICEILQKDGFIVNETLKRKAGRETLSILRIYRIGNTIWDE</sequence>
<organism>
    <name type="scientific">Schizosaccharomyces pombe (strain 972 / ATCC 24843)</name>
    <name type="common">Fission yeast</name>
    <dbReference type="NCBI Taxonomy" id="284812"/>
    <lineage>
        <taxon>Eukaryota</taxon>
        <taxon>Fungi</taxon>
        <taxon>Dikarya</taxon>
        <taxon>Ascomycota</taxon>
        <taxon>Taphrinomycotina</taxon>
        <taxon>Schizosaccharomycetes</taxon>
        <taxon>Schizosaccharomycetales</taxon>
        <taxon>Schizosaccharomycetaceae</taxon>
        <taxon>Schizosaccharomyces</taxon>
    </lineage>
</organism>
<evidence type="ECO:0000250" key="1"/>
<evidence type="ECO:0000250" key="2">
    <source>
        <dbReference type="UniProtKB" id="Q03920"/>
    </source>
</evidence>
<evidence type="ECO:0000269" key="3">
    <source>
    </source>
</evidence>
<evidence type="ECO:0000305" key="4"/>
<reference key="1">
    <citation type="journal article" date="2002" name="Nature">
        <title>The genome sequence of Schizosaccharomyces pombe.</title>
        <authorList>
            <person name="Wood V."/>
            <person name="Gwilliam R."/>
            <person name="Rajandream M.A."/>
            <person name="Lyne M.H."/>
            <person name="Lyne R."/>
            <person name="Stewart A."/>
            <person name="Sgouros J.G."/>
            <person name="Peat N."/>
            <person name="Hayles J."/>
            <person name="Baker S.G."/>
            <person name="Basham D."/>
            <person name="Bowman S."/>
            <person name="Brooks K."/>
            <person name="Brown D."/>
            <person name="Brown S."/>
            <person name="Chillingworth T."/>
            <person name="Churcher C.M."/>
            <person name="Collins M."/>
            <person name="Connor R."/>
            <person name="Cronin A."/>
            <person name="Davis P."/>
            <person name="Feltwell T."/>
            <person name="Fraser A."/>
            <person name="Gentles S."/>
            <person name="Goble A."/>
            <person name="Hamlin N."/>
            <person name="Harris D.E."/>
            <person name="Hidalgo J."/>
            <person name="Hodgson G."/>
            <person name="Holroyd S."/>
            <person name="Hornsby T."/>
            <person name="Howarth S."/>
            <person name="Huckle E.J."/>
            <person name="Hunt S."/>
            <person name="Jagels K."/>
            <person name="James K.D."/>
            <person name="Jones L."/>
            <person name="Jones M."/>
            <person name="Leather S."/>
            <person name="McDonald S."/>
            <person name="McLean J."/>
            <person name="Mooney P."/>
            <person name="Moule S."/>
            <person name="Mungall K.L."/>
            <person name="Murphy L.D."/>
            <person name="Niblett D."/>
            <person name="Odell C."/>
            <person name="Oliver K."/>
            <person name="O'Neil S."/>
            <person name="Pearson D."/>
            <person name="Quail M.A."/>
            <person name="Rabbinowitsch E."/>
            <person name="Rutherford K.M."/>
            <person name="Rutter S."/>
            <person name="Saunders D."/>
            <person name="Seeger K."/>
            <person name="Sharp S."/>
            <person name="Skelton J."/>
            <person name="Simmonds M.N."/>
            <person name="Squares R."/>
            <person name="Squares S."/>
            <person name="Stevens K."/>
            <person name="Taylor K."/>
            <person name="Taylor R.G."/>
            <person name="Tivey A."/>
            <person name="Walsh S.V."/>
            <person name="Warren T."/>
            <person name="Whitehead S."/>
            <person name="Woodward J.R."/>
            <person name="Volckaert G."/>
            <person name="Aert R."/>
            <person name="Robben J."/>
            <person name="Grymonprez B."/>
            <person name="Weltjens I."/>
            <person name="Vanstreels E."/>
            <person name="Rieger M."/>
            <person name="Schaefer M."/>
            <person name="Mueller-Auer S."/>
            <person name="Gabel C."/>
            <person name="Fuchs M."/>
            <person name="Duesterhoeft A."/>
            <person name="Fritzc C."/>
            <person name="Holzer E."/>
            <person name="Moestl D."/>
            <person name="Hilbert H."/>
            <person name="Borzym K."/>
            <person name="Langer I."/>
            <person name="Beck A."/>
            <person name="Lehrach H."/>
            <person name="Reinhardt R."/>
            <person name="Pohl T.M."/>
            <person name="Eger P."/>
            <person name="Zimmermann W."/>
            <person name="Wedler H."/>
            <person name="Wambutt R."/>
            <person name="Purnelle B."/>
            <person name="Goffeau A."/>
            <person name="Cadieu E."/>
            <person name="Dreano S."/>
            <person name="Gloux S."/>
            <person name="Lelaure V."/>
            <person name="Mottier S."/>
            <person name="Galibert F."/>
            <person name="Aves S.J."/>
            <person name="Xiang Z."/>
            <person name="Hunt C."/>
            <person name="Moore K."/>
            <person name="Hurst S.M."/>
            <person name="Lucas M."/>
            <person name="Rochet M."/>
            <person name="Gaillardin C."/>
            <person name="Tallada V.A."/>
            <person name="Garzon A."/>
            <person name="Thode G."/>
            <person name="Daga R.R."/>
            <person name="Cruzado L."/>
            <person name="Jimenez J."/>
            <person name="Sanchez M."/>
            <person name="del Rey F."/>
            <person name="Benito J."/>
            <person name="Dominguez A."/>
            <person name="Revuelta J.L."/>
            <person name="Moreno S."/>
            <person name="Armstrong J."/>
            <person name="Forsburg S.L."/>
            <person name="Cerutti L."/>
            <person name="Lowe T."/>
            <person name="McCombie W.R."/>
            <person name="Paulsen I."/>
            <person name="Potashkin J."/>
            <person name="Shpakovski G.V."/>
            <person name="Ussery D."/>
            <person name="Barrell B.G."/>
            <person name="Nurse P."/>
        </authorList>
    </citation>
    <scope>NUCLEOTIDE SEQUENCE [LARGE SCALE GENOMIC DNA]</scope>
    <source>
        <strain>972 / ATCC 24843</strain>
    </source>
</reference>
<reference key="2">
    <citation type="journal article" date="2006" name="Nat. Biotechnol.">
        <title>ORFeome cloning and global analysis of protein localization in the fission yeast Schizosaccharomyces pombe.</title>
        <authorList>
            <person name="Matsuyama A."/>
            <person name="Arai R."/>
            <person name="Yashiroda Y."/>
            <person name="Shirai A."/>
            <person name="Kamata A."/>
            <person name="Sekido S."/>
            <person name="Kobayashi Y."/>
            <person name="Hashimoto A."/>
            <person name="Hamamoto M."/>
            <person name="Hiraoka Y."/>
            <person name="Horinouchi S."/>
            <person name="Yoshida M."/>
        </authorList>
    </citation>
    <scope>SUBCELLULAR LOCATION [LARGE SCALE ANALYSIS]</scope>
</reference>
<protein>
    <recommendedName>
        <fullName>eRF1 methyltransferase catalytic subunit mtq2</fullName>
        <shortName>eRF1 MTase catalytic subunit mtq2</shortName>
        <ecNumber evidence="2">2.1.1.297</ecNumber>
    </recommendedName>
    <alternativeName>
        <fullName>N(5)-glutamine methyltransferase catalytic subunit mtq2</fullName>
    </alternativeName>
</protein>